<gene>
    <name evidence="1" type="primary">herA</name>
    <name evidence="5" type="ordered locus">MJ1429</name>
</gene>
<organism>
    <name type="scientific">Methanocaldococcus jannaschii (strain ATCC 43067 / DSM 2661 / JAL-1 / JCM 10045 / NBRC 100440)</name>
    <name type="common">Methanococcus jannaschii</name>
    <dbReference type="NCBI Taxonomy" id="243232"/>
    <lineage>
        <taxon>Archaea</taxon>
        <taxon>Methanobacteriati</taxon>
        <taxon>Methanobacteriota</taxon>
        <taxon>Methanomada group</taxon>
        <taxon>Methanococci</taxon>
        <taxon>Methanococcales</taxon>
        <taxon>Methanocaldococcaceae</taxon>
        <taxon>Methanocaldococcus</taxon>
    </lineage>
</organism>
<proteinExistence type="inferred from homology"/>
<name>HERA_METJA</name>
<feature type="chain" id="PRO_0000107323" description="Probable DNA double-strand break repair helicase HerA">
    <location>
        <begin position="1"/>
        <end position="503"/>
    </location>
</feature>
<feature type="binding site" evidence="3">
    <location>
        <position position="122"/>
    </location>
    <ligand>
        <name>ATP</name>
        <dbReference type="ChEBI" id="CHEBI:30616"/>
    </ligand>
</feature>
<feature type="binding site" evidence="3">
    <location>
        <begin position="131"/>
        <end position="136"/>
    </location>
    <ligand>
        <name>ATP</name>
        <dbReference type="ChEBI" id="CHEBI:30616"/>
    </ligand>
</feature>
<feature type="binding site" evidence="3">
    <location>
        <begin position="478"/>
        <end position="479"/>
    </location>
    <ligand>
        <name>ATP</name>
        <dbReference type="ChEBI" id="CHEBI:30616"/>
    </ligand>
</feature>
<evidence type="ECO:0000250" key="1">
    <source>
        <dbReference type="UniProtKB" id="F2Z5Z6"/>
    </source>
</evidence>
<evidence type="ECO:0000250" key="2">
    <source>
        <dbReference type="UniProtKB" id="Q8U1P0"/>
    </source>
</evidence>
<evidence type="ECO:0000250" key="3">
    <source>
        <dbReference type="UniProtKB" id="Q97WG8"/>
    </source>
</evidence>
<evidence type="ECO:0000305" key="4"/>
<evidence type="ECO:0000312" key="5">
    <source>
        <dbReference type="EMBL" id="AAB99439.1"/>
    </source>
</evidence>
<comment type="function">
    <text evidence="1 2">Involved in DNA double-strand break (DSB) repair (By similarity). Probably acts with NurA to stimulate resection of the 5' strand and produce the long 3' single-strand that is required for RadA loading (By similarity). Has DNA-dependent ATPase activity and DNA helicase activity (By similarity).</text>
</comment>
<comment type="catalytic activity">
    <reaction evidence="1">
        <text>Couples ATP hydrolysis with the unwinding of duplex DNA at the replication fork by translocating in the 5'-3' direction. This creates two antiparallel DNA single strands (ssDNA). The leading ssDNA polymer is the template for DNA polymerase III holoenzyme which synthesizes a continuous strand.</text>
        <dbReference type="EC" id="5.6.2.3"/>
    </reaction>
</comment>
<comment type="catalytic activity">
    <reaction evidence="1">
        <text>ATP + H2O = ADP + phosphate + H(+)</text>
        <dbReference type="Rhea" id="RHEA:13065"/>
        <dbReference type="ChEBI" id="CHEBI:15377"/>
        <dbReference type="ChEBI" id="CHEBI:15378"/>
        <dbReference type="ChEBI" id="CHEBI:30616"/>
        <dbReference type="ChEBI" id="CHEBI:43474"/>
        <dbReference type="ChEBI" id="CHEBI:456216"/>
        <dbReference type="EC" id="5.6.2.3"/>
    </reaction>
</comment>
<comment type="catalytic activity">
    <reaction evidence="1">
        <text>Couples ATP hydrolysis with the unwinding of duplex DNA by translocating in the 3'-5' direction.</text>
        <dbReference type="EC" id="5.6.2.4"/>
    </reaction>
</comment>
<comment type="catalytic activity">
    <reaction evidence="1">
        <text>ATP + H2O = ADP + phosphate + H(+)</text>
        <dbReference type="Rhea" id="RHEA:13065"/>
        <dbReference type="ChEBI" id="CHEBI:15377"/>
        <dbReference type="ChEBI" id="CHEBI:15378"/>
        <dbReference type="ChEBI" id="CHEBI:30616"/>
        <dbReference type="ChEBI" id="CHEBI:43474"/>
        <dbReference type="ChEBI" id="CHEBI:456216"/>
        <dbReference type="EC" id="5.6.2.4"/>
    </reaction>
</comment>
<comment type="similarity">
    <text evidence="4">Belongs to the HerA family.</text>
</comment>
<sequence>MYVMKVVGKTTTTHFTFESLEKIRFGEYVIAKNVDGRDVLGVIKNVVADVEKFVGEVKVIGVLDGNKIIPNRTPILPNSEVRLCDDEILNNIYLTPDGLNIGHLLTRDNVRVYLDTNKLVSRHFAILSITGGGKSNTASVLCRELAKKNGTVIMIDPHGEYISLYHEDMEGKIKVINPIINPVLLAPSEFANLIGIGDNEIEKRVYVEFAYHTVKHECPDAKGIEFIEKIENLLYEWSKIASVGWEIKYYNPLRRNYDRRKLEKEDFVILMSLIDTISKFKLDYALNIGDRDVIEEFEIGKINIVNLSGLEIPQMVTFVGFIAKHLLLKRITYLKSLKDVYSINEEIRRVAQSNLNIIESHYKVVTKPVLLIVEEAHIFIPVNEQNSASLWLGKIAREGRKFGVGLGLVSQRPKQLHPDVLSQTNTKIILKIVEPEDQKYIQRASEELGEDLVKDLASLGIGEAVIVGAAISLPSIVKIDKFDGVYGGKDINIVGEWMGLDDW</sequence>
<accession>Q58824</accession>
<reference key="1">
    <citation type="journal article" date="1996" name="Science">
        <title>Complete genome sequence of the methanogenic archaeon, Methanococcus jannaschii.</title>
        <authorList>
            <person name="Bult C.J."/>
            <person name="White O."/>
            <person name="Olsen G.J."/>
            <person name="Zhou L."/>
            <person name="Fleischmann R.D."/>
            <person name="Sutton G.G."/>
            <person name="Blake J.A."/>
            <person name="FitzGerald L.M."/>
            <person name="Clayton R.A."/>
            <person name="Gocayne J.D."/>
            <person name="Kerlavage A.R."/>
            <person name="Dougherty B.A."/>
            <person name="Tomb J.-F."/>
            <person name="Adams M.D."/>
            <person name="Reich C.I."/>
            <person name="Overbeek R."/>
            <person name="Kirkness E.F."/>
            <person name="Weinstock K.G."/>
            <person name="Merrick J.M."/>
            <person name="Glodek A."/>
            <person name="Scott J.L."/>
            <person name="Geoghagen N.S.M."/>
            <person name="Weidman J.F."/>
            <person name="Fuhrmann J.L."/>
            <person name="Nguyen D."/>
            <person name="Utterback T.R."/>
            <person name="Kelley J.M."/>
            <person name="Peterson J.D."/>
            <person name="Sadow P.W."/>
            <person name="Hanna M.C."/>
            <person name="Cotton M.D."/>
            <person name="Roberts K.M."/>
            <person name="Hurst M.A."/>
            <person name="Kaine B.P."/>
            <person name="Borodovsky M."/>
            <person name="Klenk H.-P."/>
            <person name="Fraser C.M."/>
            <person name="Smith H.O."/>
            <person name="Woese C.R."/>
            <person name="Venter J.C."/>
        </authorList>
    </citation>
    <scope>NUCLEOTIDE SEQUENCE [LARGE SCALE GENOMIC DNA]</scope>
    <source>
        <strain>ATCC 43067 / DSM 2661 / JAL-1 / JCM 10045 / NBRC 100440</strain>
    </source>
</reference>
<keyword id="KW-0067">ATP-binding</keyword>
<keyword id="KW-0227">DNA damage</keyword>
<keyword id="KW-0234">DNA repair</keyword>
<keyword id="KW-0238">DNA-binding</keyword>
<keyword id="KW-0347">Helicase</keyword>
<keyword id="KW-0378">Hydrolase</keyword>
<keyword id="KW-0413">Isomerase</keyword>
<keyword id="KW-0547">Nucleotide-binding</keyword>
<keyword id="KW-1185">Reference proteome</keyword>
<protein>
    <recommendedName>
        <fullName evidence="1">Probable DNA double-strand break repair helicase HerA</fullName>
        <ecNumber evidence="1">5.6.2.3</ecNumber>
        <ecNumber evidence="1">5.6.2.4</ecNumber>
    </recommendedName>
    <alternativeName>
        <fullName evidence="4">Probable bidirectional DNA 3'-5' and 5'-3' helicase HerA</fullName>
    </alternativeName>
</protein>
<dbReference type="EC" id="5.6.2.3" evidence="1"/>
<dbReference type="EC" id="5.6.2.4" evidence="1"/>
<dbReference type="EMBL" id="L77117">
    <property type="protein sequence ID" value="AAB99439.1"/>
    <property type="molecule type" value="Genomic_DNA"/>
</dbReference>
<dbReference type="PIR" id="D64478">
    <property type="entry name" value="D64478"/>
</dbReference>
<dbReference type="SMR" id="Q58824"/>
<dbReference type="STRING" id="243232.MJ_1429"/>
<dbReference type="PaxDb" id="243232-MJ_1429"/>
<dbReference type="EnsemblBacteria" id="AAB99439">
    <property type="protein sequence ID" value="AAB99439"/>
    <property type="gene ID" value="MJ_1429"/>
</dbReference>
<dbReference type="KEGG" id="mja:MJ_1429"/>
<dbReference type="eggNOG" id="arCOG00280">
    <property type="taxonomic scope" value="Archaea"/>
</dbReference>
<dbReference type="HOGENOM" id="CLU_023842_2_0_2"/>
<dbReference type="InParanoid" id="Q58824"/>
<dbReference type="OrthoDB" id="107033at2157"/>
<dbReference type="PhylomeDB" id="Q58824"/>
<dbReference type="Proteomes" id="UP000000805">
    <property type="component" value="Chromosome"/>
</dbReference>
<dbReference type="GO" id="GO:0005524">
    <property type="term" value="F:ATP binding"/>
    <property type="evidence" value="ECO:0007669"/>
    <property type="project" value="UniProtKB-KW"/>
</dbReference>
<dbReference type="GO" id="GO:0016887">
    <property type="term" value="F:ATP hydrolysis activity"/>
    <property type="evidence" value="ECO:0007669"/>
    <property type="project" value="RHEA"/>
</dbReference>
<dbReference type="GO" id="GO:0004386">
    <property type="term" value="F:helicase activity"/>
    <property type="evidence" value="ECO:0007669"/>
    <property type="project" value="UniProtKB-KW"/>
</dbReference>
<dbReference type="Gene3D" id="3.40.50.300">
    <property type="entry name" value="P-loop containing nucleotide triphosphate hydrolases"/>
    <property type="match status" value="2"/>
</dbReference>
<dbReference type="InterPro" id="IPR008571">
    <property type="entry name" value="HerA-like"/>
</dbReference>
<dbReference type="InterPro" id="IPR018538">
    <property type="entry name" value="HerA_barrel_dom"/>
</dbReference>
<dbReference type="InterPro" id="IPR002789">
    <property type="entry name" value="HerA_central"/>
</dbReference>
<dbReference type="InterPro" id="IPR027417">
    <property type="entry name" value="P-loop_NTPase"/>
</dbReference>
<dbReference type="PANTHER" id="PTHR42957">
    <property type="entry name" value="HELICASE MJ1565-RELATED"/>
    <property type="match status" value="1"/>
</dbReference>
<dbReference type="PANTHER" id="PTHR42957:SF1">
    <property type="entry name" value="HELICASE MJ1565-RELATED"/>
    <property type="match status" value="1"/>
</dbReference>
<dbReference type="Pfam" id="PF01935">
    <property type="entry name" value="DUF87"/>
    <property type="match status" value="1"/>
</dbReference>
<dbReference type="Pfam" id="PF09378">
    <property type="entry name" value="HAS-barrel"/>
    <property type="match status" value="1"/>
</dbReference>
<dbReference type="SUPFAM" id="SSF52540">
    <property type="entry name" value="P-loop containing nucleoside triphosphate hydrolases"/>
    <property type="match status" value="1"/>
</dbReference>